<gene>
    <name evidence="1" type="primary">xseA</name>
    <name type="ordered locus">SSP1231</name>
</gene>
<dbReference type="EC" id="3.1.11.6" evidence="1"/>
<dbReference type="EMBL" id="AP008934">
    <property type="protein sequence ID" value="BAE18376.1"/>
    <property type="molecule type" value="Genomic_DNA"/>
</dbReference>
<dbReference type="RefSeq" id="WP_011303037.1">
    <property type="nucleotide sequence ID" value="NZ_MTGA01000038.1"/>
</dbReference>
<dbReference type="SMR" id="Q49XW8"/>
<dbReference type="GeneID" id="3616998"/>
<dbReference type="KEGG" id="ssp:SSP1231"/>
<dbReference type="PATRIC" id="fig|342451.11.peg.1230"/>
<dbReference type="eggNOG" id="COG1570">
    <property type="taxonomic scope" value="Bacteria"/>
</dbReference>
<dbReference type="HOGENOM" id="CLU_023625_3_1_9"/>
<dbReference type="OrthoDB" id="9802795at2"/>
<dbReference type="Proteomes" id="UP000006371">
    <property type="component" value="Chromosome"/>
</dbReference>
<dbReference type="GO" id="GO:0005737">
    <property type="term" value="C:cytoplasm"/>
    <property type="evidence" value="ECO:0007669"/>
    <property type="project" value="UniProtKB-SubCell"/>
</dbReference>
<dbReference type="GO" id="GO:0009318">
    <property type="term" value="C:exodeoxyribonuclease VII complex"/>
    <property type="evidence" value="ECO:0007669"/>
    <property type="project" value="InterPro"/>
</dbReference>
<dbReference type="GO" id="GO:0008855">
    <property type="term" value="F:exodeoxyribonuclease VII activity"/>
    <property type="evidence" value="ECO:0007669"/>
    <property type="project" value="UniProtKB-UniRule"/>
</dbReference>
<dbReference type="GO" id="GO:0003676">
    <property type="term" value="F:nucleic acid binding"/>
    <property type="evidence" value="ECO:0007669"/>
    <property type="project" value="InterPro"/>
</dbReference>
<dbReference type="GO" id="GO:0006308">
    <property type="term" value="P:DNA catabolic process"/>
    <property type="evidence" value="ECO:0007669"/>
    <property type="project" value="UniProtKB-UniRule"/>
</dbReference>
<dbReference type="CDD" id="cd04489">
    <property type="entry name" value="ExoVII_LU_OBF"/>
    <property type="match status" value="1"/>
</dbReference>
<dbReference type="HAMAP" id="MF_00378">
    <property type="entry name" value="Exonuc_7_L"/>
    <property type="match status" value="1"/>
</dbReference>
<dbReference type="InterPro" id="IPR003753">
    <property type="entry name" value="Exonuc_VII_L"/>
</dbReference>
<dbReference type="InterPro" id="IPR020579">
    <property type="entry name" value="Exonuc_VII_lsu_C"/>
</dbReference>
<dbReference type="InterPro" id="IPR025824">
    <property type="entry name" value="OB-fold_nuc-bd_dom"/>
</dbReference>
<dbReference type="NCBIfam" id="TIGR00237">
    <property type="entry name" value="xseA"/>
    <property type="match status" value="1"/>
</dbReference>
<dbReference type="PANTHER" id="PTHR30008">
    <property type="entry name" value="EXODEOXYRIBONUCLEASE 7 LARGE SUBUNIT"/>
    <property type="match status" value="1"/>
</dbReference>
<dbReference type="PANTHER" id="PTHR30008:SF0">
    <property type="entry name" value="EXODEOXYRIBONUCLEASE 7 LARGE SUBUNIT"/>
    <property type="match status" value="1"/>
</dbReference>
<dbReference type="Pfam" id="PF02601">
    <property type="entry name" value="Exonuc_VII_L"/>
    <property type="match status" value="1"/>
</dbReference>
<dbReference type="Pfam" id="PF13742">
    <property type="entry name" value="tRNA_anti_2"/>
    <property type="match status" value="1"/>
</dbReference>
<sequence>MSEYLSVTSLTKYIKYKFDQDPHLQSVLIKGELSNFKKHSSGHLYFNVKDKNSVISAMMFKGNASKIDFEPKEGDEVLLEARVSVYERRGNYQIYVNKMHMDGIGNLYQKLEQLKKKLTKEGFFDQNHKKVIPKFPQKIAVLTAGTGAAIRDIHTTINSRYPLAEQVQINTLVQGEQAKSDIIEKINQADALNVDTIIIGRGGGSIEDLWNFNEEDVVKAIYNCQTPIISAVGHETDFTLSDFVADVRAATPTQAAVMATPDQYELRQYLQQANLSLTRFIKQYMQQKRKHLEHVASYYKFQTPSLLYDQQIQKRDDLEKQLKLSLNLKIKNQQQQLQLLFNNFNLKTFKQRIKRDQLTNNQKRVELSKVMHNLLDNQKNNLARKLENLNNLSPTNTMLRGYTIVNKDDKVITSTKDLAENDNIVLTMKDGVVDAQVKKVRCNDE</sequence>
<proteinExistence type="inferred from homology"/>
<comment type="function">
    <text evidence="1">Bidirectionally degrades single-stranded DNA into large acid-insoluble oligonucleotides, which are then degraded further into small acid-soluble oligonucleotides.</text>
</comment>
<comment type="catalytic activity">
    <reaction evidence="1">
        <text>Exonucleolytic cleavage in either 5'- to 3'- or 3'- to 5'-direction to yield nucleoside 5'-phosphates.</text>
        <dbReference type="EC" id="3.1.11.6"/>
    </reaction>
</comment>
<comment type="subunit">
    <text evidence="1">Heterooligomer composed of large and small subunits.</text>
</comment>
<comment type="subcellular location">
    <subcellularLocation>
        <location evidence="1">Cytoplasm</location>
    </subcellularLocation>
</comment>
<comment type="similarity">
    <text evidence="1">Belongs to the XseA family.</text>
</comment>
<reference key="1">
    <citation type="journal article" date="2005" name="Proc. Natl. Acad. Sci. U.S.A.">
        <title>Whole genome sequence of Staphylococcus saprophyticus reveals the pathogenesis of uncomplicated urinary tract infection.</title>
        <authorList>
            <person name="Kuroda M."/>
            <person name="Yamashita A."/>
            <person name="Hirakawa H."/>
            <person name="Kumano M."/>
            <person name="Morikawa K."/>
            <person name="Higashide M."/>
            <person name="Maruyama A."/>
            <person name="Inose Y."/>
            <person name="Matoba K."/>
            <person name="Toh H."/>
            <person name="Kuhara S."/>
            <person name="Hattori M."/>
            <person name="Ohta T."/>
        </authorList>
    </citation>
    <scope>NUCLEOTIDE SEQUENCE [LARGE SCALE GENOMIC DNA]</scope>
    <source>
        <strain>ATCC 15305 / DSM 20229 / NCIMB 8711 / NCTC 7292 / S-41</strain>
    </source>
</reference>
<protein>
    <recommendedName>
        <fullName evidence="1">Exodeoxyribonuclease 7 large subunit</fullName>
        <ecNumber evidence="1">3.1.11.6</ecNumber>
    </recommendedName>
    <alternativeName>
        <fullName evidence="1">Exodeoxyribonuclease VII large subunit</fullName>
        <shortName evidence="1">Exonuclease VII large subunit</shortName>
    </alternativeName>
</protein>
<organism>
    <name type="scientific">Staphylococcus saprophyticus subsp. saprophyticus (strain ATCC 15305 / DSM 20229 / NCIMB 8711 / NCTC 7292 / S-41)</name>
    <dbReference type="NCBI Taxonomy" id="342451"/>
    <lineage>
        <taxon>Bacteria</taxon>
        <taxon>Bacillati</taxon>
        <taxon>Bacillota</taxon>
        <taxon>Bacilli</taxon>
        <taxon>Bacillales</taxon>
        <taxon>Staphylococcaceae</taxon>
        <taxon>Staphylococcus</taxon>
    </lineage>
</organism>
<keyword id="KW-0963">Cytoplasm</keyword>
<keyword id="KW-0269">Exonuclease</keyword>
<keyword id="KW-0378">Hydrolase</keyword>
<keyword id="KW-0540">Nuclease</keyword>
<keyword id="KW-1185">Reference proteome</keyword>
<name>EX7L_STAS1</name>
<accession>Q49XW8</accession>
<feature type="chain" id="PRO_0000197886" description="Exodeoxyribonuclease 7 large subunit">
    <location>
        <begin position="1"/>
        <end position="445"/>
    </location>
</feature>
<evidence type="ECO:0000255" key="1">
    <source>
        <dbReference type="HAMAP-Rule" id="MF_00378"/>
    </source>
</evidence>